<comment type="function">
    <text>Not known. This protein is one of the major immune reactive proteins in mycobacteria.</text>
</comment>
<comment type="similarity">
    <text evidence="1">Belongs to the small heat shock protein (HSP20) family.</text>
</comment>
<name>18K1_MYCAV</name>
<feature type="chain" id="PRO_0000126012" description="18 kDa antigen 1">
    <location>
        <begin position="1"/>
        <end position="147"/>
    </location>
</feature>
<feature type="domain" description="sHSP" evidence="1">
    <location>
        <begin position="21"/>
        <end position="131"/>
    </location>
</feature>
<reference key="1">
    <citation type="journal article" date="1993" name="Infect. Immun.">
        <title>Homologs of Mycobacterium leprae 18-kilodalton and Mycobacterium tuberculosis 19-kilodalton antigens in other mycobacteria.</title>
        <authorList>
            <person name="Booth R.J."/>
            <person name="Williams D.L."/>
            <person name="Moudgil K.D."/>
            <person name="Noonan L.C."/>
            <person name="Grandison P.M."/>
            <person name="McKee J.J."/>
            <person name="Prestidge R.L."/>
            <person name="Watson J.D."/>
        </authorList>
    </citation>
    <scope>NUCLEOTIDE SEQUENCE [GENOMIC DNA]</scope>
    <source>
        <strain>Serovar 2</strain>
    </source>
</reference>
<protein>
    <recommendedName>
        <fullName>18 kDa antigen 1</fullName>
    </recommendedName>
    <alternativeName>
        <fullName>Clone MAVC124</fullName>
    </alternativeName>
</protein>
<accession>P46729</accession>
<organism>
    <name type="scientific">Mycobacterium avium</name>
    <dbReference type="NCBI Taxonomy" id="1764"/>
    <lineage>
        <taxon>Bacteria</taxon>
        <taxon>Bacillati</taxon>
        <taxon>Actinomycetota</taxon>
        <taxon>Actinomycetes</taxon>
        <taxon>Mycobacteriales</taxon>
        <taxon>Mycobacteriaceae</taxon>
        <taxon>Mycobacterium</taxon>
        <taxon>Mycobacterium avium complex (MAC)</taxon>
    </lineage>
</organism>
<evidence type="ECO:0000255" key="1">
    <source>
        <dbReference type="PROSITE-ProRule" id="PRU00285"/>
    </source>
</evidence>
<sequence length="147" mass="16544">MLMRSDPFRELDRLTNQVLGTPTRPAVMPMDAWRVGRRLVVEFDLPGIDAESLDIDIERNVLTVRAERPALDPNREMLATERPRGVFSRELVLGDNLDTDKIEASYRDGVLSLHIPVDEKARPRKIAVGAARHPEPSPKTAREVVNA</sequence>
<proteinExistence type="inferred from homology"/>
<dbReference type="EMBL" id="L12236">
    <property type="protein sequence ID" value="AAA25341.1"/>
    <property type="molecule type" value="Genomic_DNA"/>
</dbReference>
<dbReference type="SMR" id="P46729"/>
<dbReference type="CDD" id="cd06464">
    <property type="entry name" value="ACD_sHsps-like"/>
    <property type="match status" value="1"/>
</dbReference>
<dbReference type="Gene3D" id="2.60.40.790">
    <property type="match status" value="1"/>
</dbReference>
<dbReference type="InterPro" id="IPR002068">
    <property type="entry name" value="A-crystallin/Hsp20_dom"/>
</dbReference>
<dbReference type="InterPro" id="IPR008978">
    <property type="entry name" value="HSP20-like_chaperone"/>
</dbReference>
<dbReference type="InterPro" id="IPR031107">
    <property type="entry name" value="Small_HSP"/>
</dbReference>
<dbReference type="PANTHER" id="PTHR11527">
    <property type="entry name" value="HEAT-SHOCK PROTEIN 20 FAMILY MEMBER"/>
    <property type="match status" value="1"/>
</dbReference>
<dbReference type="Pfam" id="PF00011">
    <property type="entry name" value="HSP20"/>
    <property type="match status" value="1"/>
</dbReference>
<dbReference type="SUPFAM" id="SSF49764">
    <property type="entry name" value="HSP20-like chaperones"/>
    <property type="match status" value="1"/>
</dbReference>
<dbReference type="PROSITE" id="PS01031">
    <property type="entry name" value="SHSP"/>
    <property type="match status" value="1"/>
</dbReference>